<reference key="1">
    <citation type="submission" date="1997-03" db="EMBL/GenBank/DDBJ databases">
        <title>A 148 kbp sequence of the region between 35 and 47 degree of the Bacillus subtilis genome.</title>
        <authorList>
            <person name="Kasahara Y."/>
            <person name="Nakai S."/>
            <person name="Lee S."/>
            <person name="Sadaie Y."/>
            <person name="Ogasawara N."/>
        </authorList>
    </citation>
    <scope>NUCLEOTIDE SEQUENCE [GENOMIC DNA]</scope>
    <source>
        <strain>168</strain>
    </source>
</reference>
<reference key="2">
    <citation type="journal article" date="1997" name="Nature">
        <title>The complete genome sequence of the Gram-positive bacterium Bacillus subtilis.</title>
        <authorList>
            <person name="Kunst F."/>
            <person name="Ogasawara N."/>
            <person name="Moszer I."/>
            <person name="Albertini A.M."/>
            <person name="Alloni G."/>
            <person name="Azevedo V."/>
            <person name="Bertero M.G."/>
            <person name="Bessieres P."/>
            <person name="Bolotin A."/>
            <person name="Borchert S."/>
            <person name="Borriss R."/>
            <person name="Boursier L."/>
            <person name="Brans A."/>
            <person name="Braun M."/>
            <person name="Brignell S.C."/>
            <person name="Bron S."/>
            <person name="Brouillet S."/>
            <person name="Bruschi C.V."/>
            <person name="Caldwell B."/>
            <person name="Capuano V."/>
            <person name="Carter N.M."/>
            <person name="Choi S.-K."/>
            <person name="Codani J.-J."/>
            <person name="Connerton I.F."/>
            <person name="Cummings N.J."/>
            <person name="Daniel R.A."/>
            <person name="Denizot F."/>
            <person name="Devine K.M."/>
            <person name="Duesterhoeft A."/>
            <person name="Ehrlich S.D."/>
            <person name="Emmerson P.T."/>
            <person name="Entian K.-D."/>
            <person name="Errington J."/>
            <person name="Fabret C."/>
            <person name="Ferrari E."/>
            <person name="Foulger D."/>
            <person name="Fritz C."/>
            <person name="Fujita M."/>
            <person name="Fujita Y."/>
            <person name="Fuma S."/>
            <person name="Galizzi A."/>
            <person name="Galleron N."/>
            <person name="Ghim S.-Y."/>
            <person name="Glaser P."/>
            <person name="Goffeau A."/>
            <person name="Golightly E.J."/>
            <person name="Grandi G."/>
            <person name="Guiseppi G."/>
            <person name="Guy B.J."/>
            <person name="Haga K."/>
            <person name="Haiech J."/>
            <person name="Harwood C.R."/>
            <person name="Henaut A."/>
            <person name="Hilbert H."/>
            <person name="Holsappel S."/>
            <person name="Hosono S."/>
            <person name="Hullo M.-F."/>
            <person name="Itaya M."/>
            <person name="Jones L.-M."/>
            <person name="Joris B."/>
            <person name="Karamata D."/>
            <person name="Kasahara Y."/>
            <person name="Klaerr-Blanchard M."/>
            <person name="Klein C."/>
            <person name="Kobayashi Y."/>
            <person name="Koetter P."/>
            <person name="Koningstein G."/>
            <person name="Krogh S."/>
            <person name="Kumano M."/>
            <person name="Kurita K."/>
            <person name="Lapidus A."/>
            <person name="Lardinois S."/>
            <person name="Lauber J."/>
            <person name="Lazarevic V."/>
            <person name="Lee S.-M."/>
            <person name="Levine A."/>
            <person name="Liu H."/>
            <person name="Masuda S."/>
            <person name="Mauel C."/>
            <person name="Medigue C."/>
            <person name="Medina N."/>
            <person name="Mellado R.P."/>
            <person name="Mizuno M."/>
            <person name="Moestl D."/>
            <person name="Nakai S."/>
            <person name="Noback M."/>
            <person name="Noone D."/>
            <person name="O'Reilly M."/>
            <person name="Ogawa K."/>
            <person name="Ogiwara A."/>
            <person name="Oudega B."/>
            <person name="Park S.-H."/>
            <person name="Parro V."/>
            <person name="Pohl T.M."/>
            <person name="Portetelle D."/>
            <person name="Porwollik S."/>
            <person name="Prescott A.M."/>
            <person name="Presecan E."/>
            <person name="Pujic P."/>
            <person name="Purnelle B."/>
            <person name="Rapoport G."/>
            <person name="Rey M."/>
            <person name="Reynolds S."/>
            <person name="Rieger M."/>
            <person name="Rivolta C."/>
            <person name="Rocha E."/>
            <person name="Roche B."/>
            <person name="Rose M."/>
            <person name="Sadaie Y."/>
            <person name="Sato T."/>
            <person name="Scanlan E."/>
            <person name="Schleich S."/>
            <person name="Schroeter R."/>
            <person name="Scoffone F."/>
            <person name="Sekiguchi J."/>
            <person name="Sekowska A."/>
            <person name="Seror S.J."/>
            <person name="Serror P."/>
            <person name="Shin B.-S."/>
            <person name="Soldo B."/>
            <person name="Sorokin A."/>
            <person name="Tacconi E."/>
            <person name="Takagi T."/>
            <person name="Takahashi H."/>
            <person name="Takemaru K."/>
            <person name="Takeuchi M."/>
            <person name="Tamakoshi A."/>
            <person name="Tanaka T."/>
            <person name="Terpstra P."/>
            <person name="Tognoni A."/>
            <person name="Tosato V."/>
            <person name="Uchiyama S."/>
            <person name="Vandenbol M."/>
            <person name="Vannier F."/>
            <person name="Vassarotti A."/>
            <person name="Viari A."/>
            <person name="Wambutt R."/>
            <person name="Wedler E."/>
            <person name="Wedler H."/>
            <person name="Weitzenegger T."/>
            <person name="Winters P."/>
            <person name="Wipat A."/>
            <person name="Yamamoto H."/>
            <person name="Yamane K."/>
            <person name="Yasumoto K."/>
            <person name="Yata K."/>
            <person name="Yoshida K."/>
            <person name="Yoshikawa H.-F."/>
            <person name="Zumstein E."/>
            <person name="Yoshikawa H."/>
            <person name="Danchin A."/>
        </authorList>
    </citation>
    <scope>NUCLEOTIDE SEQUENCE [LARGE SCALE GENOMIC DNA]</scope>
    <source>
        <strain>168</strain>
    </source>
</reference>
<organism>
    <name type="scientific">Bacillus subtilis (strain 168)</name>
    <dbReference type="NCBI Taxonomy" id="224308"/>
    <lineage>
        <taxon>Bacteria</taxon>
        <taxon>Bacillati</taxon>
        <taxon>Bacillota</taxon>
        <taxon>Bacilli</taxon>
        <taxon>Bacillales</taxon>
        <taxon>Bacillaceae</taxon>
        <taxon>Bacillus</taxon>
    </lineage>
</organism>
<sequence>MEWHSKFSGPNTSPGFLLWQATQSWQRKVGKALAEFDLTHVQFVLLTSCKYMIAHGETVTQKKLASFSQTNIMMVSEVVRTLEKKGFIERSKNPQDKREVLLSLTEIGGEKVTAALPIVEKIDQAFFAAAMKKENFLSGLQELLKHE</sequence>
<name>YDCH_BACSU</name>
<feature type="chain" id="PRO_0000360729" description="Uncharacterized HTH-type transcriptional regulator YdcH">
    <location>
        <begin position="1"/>
        <end position="147"/>
    </location>
</feature>
<feature type="domain" description="HTH marR-type" evidence="1">
    <location>
        <begin position="11"/>
        <end position="147"/>
    </location>
</feature>
<feature type="DNA-binding region" description="H-T-H motif" evidence="1">
    <location>
        <begin position="61"/>
        <end position="84"/>
    </location>
</feature>
<accession>P96625</accession>
<accession>Q797K2</accession>
<protein>
    <recommendedName>
        <fullName>Uncharacterized HTH-type transcriptional regulator YdcH</fullName>
    </recommendedName>
</protein>
<gene>
    <name type="primary">ydcH</name>
    <name type="ordered locus">BSU04770</name>
</gene>
<dbReference type="EMBL" id="AB001488">
    <property type="protein sequence ID" value="BAA19314.1"/>
    <property type="molecule type" value="Genomic_DNA"/>
</dbReference>
<dbReference type="EMBL" id="AL009126">
    <property type="protein sequence ID" value="CAB12284.1"/>
    <property type="molecule type" value="Genomic_DNA"/>
</dbReference>
<dbReference type="PIR" id="F69773">
    <property type="entry name" value="F69773"/>
</dbReference>
<dbReference type="RefSeq" id="NP_388358.1">
    <property type="nucleotide sequence ID" value="NC_000964.3"/>
</dbReference>
<dbReference type="RefSeq" id="WP_003246643.1">
    <property type="nucleotide sequence ID" value="NZ_OZ025638.1"/>
</dbReference>
<dbReference type="SMR" id="P96625"/>
<dbReference type="FunCoup" id="P96625">
    <property type="interactions" value="47"/>
</dbReference>
<dbReference type="STRING" id="224308.BSU04770"/>
<dbReference type="PaxDb" id="224308-BSU04770"/>
<dbReference type="EnsemblBacteria" id="CAB12284">
    <property type="protein sequence ID" value="CAB12284"/>
    <property type="gene ID" value="BSU_04770"/>
</dbReference>
<dbReference type="GeneID" id="939928"/>
<dbReference type="KEGG" id="bsu:BSU04770"/>
<dbReference type="PATRIC" id="fig|224308.179.peg.506"/>
<dbReference type="eggNOG" id="COG1846">
    <property type="taxonomic scope" value="Bacteria"/>
</dbReference>
<dbReference type="InParanoid" id="P96625"/>
<dbReference type="OrthoDB" id="9806864at2"/>
<dbReference type="PhylomeDB" id="P96625"/>
<dbReference type="BioCyc" id="BSUB:BSU04770-MONOMER"/>
<dbReference type="Proteomes" id="UP000001570">
    <property type="component" value="Chromosome"/>
</dbReference>
<dbReference type="GO" id="GO:0003677">
    <property type="term" value="F:DNA binding"/>
    <property type="evidence" value="ECO:0007669"/>
    <property type="project" value="UniProtKB-KW"/>
</dbReference>
<dbReference type="GO" id="GO:0003700">
    <property type="term" value="F:DNA-binding transcription factor activity"/>
    <property type="evidence" value="ECO:0007669"/>
    <property type="project" value="InterPro"/>
</dbReference>
<dbReference type="GO" id="GO:0006355">
    <property type="term" value="P:regulation of DNA-templated transcription"/>
    <property type="evidence" value="ECO:0000318"/>
    <property type="project" value="GO_Central"/>
</dbReference>
<dbReference type="GO" id="GO:0006950">
    <property type="term" value="P:response to stress"/>
    <property type="evidence" value="ECO:0000318"/>
    <property type="project" value="GO_Central"/>
</dbReference>
<dbReference type="FunFam" id="1.10.10.10:FF:001198">
    <property type="entry name" value="MarR family transcriptional regulator"/>
    <property type="match status" value="1"/>
</dbReference>
<dbReference type="Gene3D" id="1.10.10.10">
    <property type="entry name" value="Winged helix-like DNA-binding domain superfamily/Winged helix DNA-binding domain"/>
    <property type="match status" value="1"/>
</dbReference>
<dbReference type="InterPro" id="IPR000835">
    <property type="entry name" value="HTH_MarR-typ"/>
</dbReference>
<dbReference type="InterPro" id="IPR039422">
    <property type="entry name" value="MarR/SlyA-like"/>
</dbReference>
<dbReference type="InterPro" id="IPR036388">
    <property type="entry name" value="WH-like_DNA-bd_sf"/>
</dbReference>
<dbReference type="InterPro" id="IPR036390">
    <property type="entry name" value="WH_DNA-bd_sf"/>
</dbReference>
<dbReference type="PANTHER" id="PTHR33164:SF64">
    <property type="entry name" value="TRANSCRIPTIONAL REGULATOR SLYA"/>
    <property type="match status" value="1"/>
</dbReference>
<dbReference type="PANTHER" id="PTHR33164">
    <property type="entry name" value="TRANSCRIPTIONAL REGULATOR, MARR FAMILY"/>
    <property type="match status" value="1"/>
</dbReference>
<dbReference type="Pfam" id="PF01047">
    <property type="entry name" value="MarR"/>
    <property type="match status" value="1"/>
</dbReference>
<dbReference type="SMART" id="SM00347">
    <property type="entry name" value="HTH_MARR"/>
    <property type="match status" value="1"/>
</dbReference>
<dbReference type="SUPFAM" id="SSF46785">
    <property type="entry name" value="Winged helix' DNA-binding domain"/>
    <property type="match status" value="1"/>
</dbReference>
<dbReference type="PROSITE" id="PS50995">
    <property type="entry name" value="HTH_MARR_2"/>
    <property type="match status" value="1"/>
</dbReference>
<keyword id="KW-0238">DNA-binding</keyword>
<keyword id="KW-1185">Reference proteome</keyword>
<keyword id="KW-0804">Transcription</keyword>
<keyword id="KW-0805">Transcription regulation</keyword>
<evidence type="ECO:0000255" key="1">
    <source>
        <dbReference type="PROSITE-ProRule" id="PRU00345"/>
    </source>
</evidence>
<proteinExistence type="predicted"/>